<accession>P13309</accession>
<organismHost>
    <name type="scientific">Escherichia coli</name>
    <dbReference type="NCBI Taxonomy" id="562"/>
</organismHost>
<organism>
    <name type="scientific">Enterobacteria phage T4</name>
    <name type="common">Bacteriophage T4</name>
    <dbReference type="NCBI Taxonomy" id="10665"/>
    <lineage>
        <taxon>Viruses</taxon>
        <taxon>Duplodnaviria</taxon>
        <taxon>Heunggongvirae</taxon>
        <taxon>Uroviricota</taxon>
        <taxon>Caudoviricetes</taxon>
        <taxon>Straboviridae</taxon>
        <taxon>Tevenvirinae</taxon>
        <taxon>Tequatrovirus</taxon>
    </lineage>
</organism>
<dbReference type="EMBL" id="X04567">
    <property type="protein sequence ID" value="CAA28230.1"/>
    <property type="molecule type" value="Genomic_DNA"/>
</dbReference>
<dbReference type="EMBL" id="AF158101">
    <property type="protein sequence ID" value="AAD42667.1"/>
    <property type="molecule type" value="Genomic_DNA"/>
</dbReference>
<dbReference type="RefSeq" id="NP_049723.1">
    <property type="nucleotide sequence ID" value="NC_000866.4"/>
</dbReference>
<dbReference type="SMR" id="P13309"/>
<dbReference type="GeneID" id="1258663"/>
<dbReference type="KEGG" id="vg:1258663"/>
<dbReference type="OrthoDB" id="15963at10239"/>
<dbReference type="Proteomes" id="UP000009087">
    <property type="component" value="Segment"/>
</dbReference>
<dbReference type="GO" id="GO:0140291">
    <property type="term" value="P:peptidyl-glutamate ADP-deribosylation"/>
    <property type="evidence" value="ECO:0007669"/>
    <property type="project" value="TreeGrafter"/>
</dbReference>
<dbReference type="CDD" id="cd02901">
    <property type="entry name" value="Macro_Poa1p-like"/>
    <property type="match status" value="1"/>
</dbReference>
<dbReference type="Gene3D" id="3.40.220.10">
    <property type="entry name" value="Leucine Aminopeptidase, subunit E, domain 1"/>
    <property type="match status" value="1"/>
</dbReference>
<dbReference type="InterPro" id="IPR050892">
    <property type="entry name" value="ADP-ribose_metab_enzymes"/>
</dbReference>
<dbReference type="InterPro" id="IPR002589">
    <property type="entry name" value="Macro_dom"/>
</dbReference>
<dbReference type="InterPro" id="IPR043472">
    <property type="entry name" value="Macro_dom-like"/>
</dbReference>
<dbReference type="PANTHER" id="PTHR12521:SF0">
    <property type="entry name" value="ADP-RIBOSE GLYCOHYDROLASE OARD1"/>
    <property type="match status" value="1"/>
</dbReference>
<dbReference type="PANTHER" id="PTHR12521">
    <property type="entry name" value="PROTEIN C6ORF130"/>
    <property type="match status" value="1"/>
</dbReference>
<dbReference type="Pfam" id="PF01661">
    <property type="entry name" value="Macro"/>
    <property type="match status" value="1"/>
</dbReference>
<dbReference type="SMART" id="SM00506">
    <property type="entry name" value="A1pp"/>
    <property type="match status" value="1"/>
</dbReference>
<dbReference type="SUPFAM" id="SSF52949">
    <property type="entry name" value="Macro domain-like"/>
    <property type="match status" value="1"/>
</dbReference>
<dbReference type="PROSITE" id="PS51154">
    <property type="entry name" value="MACRO"/>
    <property type="match status" value="1"/>
</dbReference>
<name>Y06D_BPT4</name>
<protein>
    <recommendedName>
        <fullName>Uncharacterized 17.5 kDa protein in tk-vs intergenic region</fullName>
    </recommendedName>
</protein>
<sequence length="155" mass="17489">MIVKYIKGDIVALFAEGKNIAHGCNCFHTMGSGVAGQLTKAFPKILEADKLQTEWGDVTKLGSYSVYEKYFRTHKAYCFNLYTQFQPGPNFEYSALMNCMLELNEFGENKLIKPTIYMPRIGAGIGKGNWDIIEGILDTYSSKLEIVIVDWEPLL</sequence>
<proteinExistence type="predicted"/>
<gene>
    <name type="primary">y06D</name>
    <name type="synonym">60.5</name>
    <name type="synonym">tk.4</name>
</gene>
<evidence type="ECO:0000255" key="1">
    <source>
        <dbReference type="PROSITE-ProRule" id="PRU00490"/>
    </source>
</evidence>
<reference key="1">
    <citation type="journal article" date="1986" name="Nucleic Acids Res.">
        <title>Nucleotide sequence and analysis of the 58.3 to 65.5-kb early region of bacteriophage T4.</title>
        <authorList>
            <person name="Valerie K."/>
            <person name="Stevens J."/>
            <person name="Lynch M."/>
            <person name="Henderson E.E."/>
            <person name="de Riel J.K."/>
        </authorList>
    </citation>
    <scope>NUCLEOTIDE SEQUENCE [GENOMIC DNA]</scope>
</reference>
<reference key="2">
    <citation type="journal article" date="2003" name="Microbiol. Mol. Biol. Rev.">
        <title>Bacteriophage T4 genome.</title>
        <authorList>
            <person name="Miller E.S."/>
            <person name="Kutter E."/>
            <person name="Mosig G."/>
            <person name="Arisaka F."/>
            <person name="Kunisawa T."/>
            <person name="Ruger W."/>
        </authorList>
    </citation>
    <scope>NUCLEOTIDE SEQUENCE [LARGE SCALE GENOMIC DNA]</scope>
</reference>
<keyword id="KW-1185">Reference proteome</keyword>
<feature type="chain" id="PRO_0000165136" description="Uncharacterized 17.5 kDa protein in tk-vs intergenic region">
    <location>
        <begin position="1"/>
        <end position="155"/>
    </location>
</feature>
<feature type="domain" description="Macro" evidence="1">
    <location>
        <begin position="1"/>
        <end position="155"/>
    </location>
</feature>